<name>SCX3_CENNO</name>
<evidence type="ECO:0000250" key="1"/>
<evidence type="ECO:0000255" key="2">
    <source>
        <dbReference type="PROSITE-ProRule" id="PRU01210"/>
    </source>
</evidence>
<evidence type="ECO:0000305" key="3"/>
<sequence length="66" mass="7553">KEGYLVELGTGCKYECFKLGDNDYCLRECKARYGKGAGGYCYAFGCWCTQLYEQAVVWPLKNKTCR</sequence>
<accession>P80076</accession>
<feature type="chain" id="PRO_0000066767" description="Toxin Cn3">
    <location>
        <begin position="1"/>
        <end position="66"/>
    </location>
</feature>
<feature type="domain" description="LCN-type CS-alpha/beta" evidence="2">
    <location>
        <begin position="1"/>
        <end position="66"/>
    </location>
</feature>
<feature type="disulfide bond" evidence="2">
    <location>
        <begin position="12"/>
        <end position="65"/>
    </location>
</feature>
<feature type="disulfide bond" evidence="2">
    <location>
        <begin position="16"/>
        <end position="41"/>
    </location>
</feature>
<feature type="disulfide bond" evidence="2">
    <location>
        <begin position="25"/>
        <end position="46"/>
    </location>
</feature>
<feature type="disulfide bond" evidence="2">
    <location>
        <begin position="29"/>
        <end position="48"/>
    </location>
</feature>
<comment type="function">
    <text evidence="1">Beta toxins bind voltage-independently at site-4 of sodium channels (Nav) and shift the voltage of activation toward more negative potentials thereby affecting sodium channel activation and promoting spontaneous and repetitive firing.</text>
</comment>
<comment type="subcellular location">
    <subcellularLocation>
        <location>Secreted</location>
    </subcellularLocation>
</comment>
<comment type="tissue specificity">
    <text>Expressed by the venom gland.</text>
</comment>
<comment type="domain">
    <text evidence="3">Has the structural arrangement of an alpha-helix connected to antiparallel beta-sheets by disulfide bonds (CS-alpha/beta).</text>
</comment>
<comment type="similarity">
    <text evidence="3">Belongs to the long (4 C-C) scorpion toxin superfamily. Sodium channel inhibitor family. Beta subfamily.</text>
</comment>
<proteinExistence type="evidence at protein level"/>
<organism>
    <name type="scientific">Centruroides noxius</name>
    <name type="common">Mexican scorpion</name>
    <dbReference type="NCBI Taxonomy" id="6878"/>
    <lineage>
        <taxon>Eukaryota</taxon>
        <taxon>Metazoa</taxon>
        <taxon>Ecdysozoa</taxon>
        <taxon>Arthropoda</taxon>
        <taxon>Chelicerata</taxon>
        <taxon>Arachnida</taxon>
        <taxon>Scorpiones</taxon>
        <taxon>Buthida</taxon>
        <taxon>Buthoidea</taxon>
        <taxon>Buthidae</taxon>
        <taxon>Centruroides</taxon>
    </lineage>
</organism>
<keyword id="KW-0903">Direct protein sequencing</keyword>
<keyword id="KW-1015">Disulfide bond</keyword>
<keyword id="KW-0872">Ion channel impairing toxin</keyword>
<keyword id="KW-0528">Neurotoxin</keyword>
<keyword id="KW-0964">Secreted</keyword>
<keyword id="KW-0800">Toxin</keyword>
<keyword id="KW-0738">Voltage-gated sodium channel impairing toxin</keyword>
<protein>
    <recommendedName>
        <fullName>Toxin Cn3</fullName>
        <shortName>Toxin 3</shortName>
    </recommendedName>
    <alternativeName>
        <fullName>Toxin II.9.2.3</fullName>
    </alternativeName>
</protein>
<reference key="1">
    <citation type="journal article" date="1992" name="Eur. J. Biochem.">
        <title>Amino acid sequence and immunological characterization with monoclonal antibodies of two toxins from the venom of the scorpion Centruroides noxius Hoffmann.</title>
        <authorList>
            <person name="Zamudio F.Z."/>
            <person name="Saavedra R."/>
            <person name="Martin B.M."/>
            <person name="Gurrola G.B."/>
            <person name="Herion P."/>
            <person name="Possani L.D."/>
        </authorList>
    </citation>
    <scope>PROTEIN SEQUENCE</scope>
    <source>
        <tissue>Venom</tissue>
    </source>
</reference>
<dbReference type="PIR" id="S23080">
    <property type="entry name" value="S23080"/>
</dbReference>
<dbReference type="SMR" id="P80076"/>
<dbReference type="GO" id="GO:0005576">
    <property type="term" value="C:extracellular region"/>
    <property type="evidence" value="ECO:0007669"/>
    <property type="project" value="UniProtKB-SubCell"/>
</dbReference>
<dbReference type="GO" id="GO:0019871">
    <property type="term" value="F:sodium channel inhibitor activity"/>
    <property type="evidence" value="ECO:0007669"/>
    <property type="project" value="InterPro"/>
</dbReference>
<dbReference type="GO" id="GO:0090729">
    <property type="term" value="F:toxin activity"/>
    <property type="evidence" value="ECO:0007669"/>
    <property type="project" value="UniProtKB-KW"/>
</dbReference>
<dbReference type="GO" id="GO:0006952">
    <property type="term" value="P:defense response"/>
    <property type="evidence" value="ECO:0007669"/>
    <property type="project" value="InterPro"/>
</dbReference>
<dbReference type="CDD" id="cd23106">
    <property type="entry name" value="neurotoxins_LC_scorpion"/>
    <property type="match status" value="1"/>
</dbReference>
<dbReference type="FunFam" id="3.30.30.10:FF:000002">
    <property type="entry name" value="Alpha-like toxin BmK-M1"/>
    <property type="match status" value="1"/>
</dbReference>
<dbReference type="Gene3D" id="3.30.30.10">
    <property type="entry name" value="Knottin, scorpion toxin-like"/>
    <property type="match status" value="1"/>
</dbReference>
<dbReference type="InterPro" id="IPR044062">
    <property type="entry name" value="LCN-type_CS_alpha_beta_dom"/>
</dbReference>
<dbReference type="InterPro" id="IPR003614">
    <property type="entry name" value="Scorpion_toxin-like"/>
</dbReference>
<dbReference type="InterPro" id="IPR036574">
    <property type="entry name" value="Scorpion_toxin-like_sf"/>
</dbReference>
<dbReference type="InterPro" id="IPR018218">
    <property type="entry name" value="Scorpion_toxinL"/>
</dbReference>
<dbReference type="InterPro" id="IPR002061">
    <property type="entry name" value="Scorpion_toxinL/defensin"/>
</dbReference>
<dbReference type="Pfam" id="PF00537">
    <property type="entry name" value="Toxin_3"/>
    <property type="match status" value="1"/>
</dbReference>
<dbReference type="PRINTS" id="PR00285">
    <property type="entry name" value="SCORPNTOXIN"/>
</dbReference>
<dbReference type="SMART" id="SM00505">
    <property type="entry name" value="Knot1"/>
    <property type="match status" value="1"/>
</dbReference>
<dbReference type="SUPFAM" id="SSF57095">
    <property type="entry name" value="Scorpion toxin-like"/>
    <property type="match status" value="1"/>
</dbReference>
<dbReference type="PROSITE" id="PS51863">
    <property type="entry name" value="LCN_CSAB"/>
    <property type="match status" value="1"/>
</dbReference>